<comment type="function">
    <text evidence="3">Extracellular dipeptidyl-peptidase which removes N-terminal dipeptides sequentially from polypeptides having unsubstituted N-termini provided that the penultimate residue is proline. Contributes to pathogenicity.</text>
</comment>
<comment type="catalytic activity">
    <reaction evidence="2">
        <text>Release of an N-terminal dipeptide, Xaa-Yaa-|-Zaa-, from a polypeptide, preferentially when Yaa is Pro, provided Zaa is neither Pro nor hydroxyproline.</text>
        <dbReference type="EC" id="3.4.14.5"/>
    </reaction>
</comment>
<comment type="biophysicochemical properties">
    <phDependence>
        <text evidence="3">Optimum pH is 7.0-9.0.</text>
    </phDependence>
</comment>
<comment type="subcellular location">
    <subcellularLocation>
        <location evidence="3">Secreted</location>
    </subcellularLocation>
</comment>
<comment type="similarity">
    <text evidence="4">Belongs to the peptidase S9B family.</text>
</comment>
<feature type="signal peptide" evidence="1">
    <location>
        <begin position="1"/>
        <end position="15"/>
    </location>
</feature>
<feature type="chain" id="PRO_0000384089" description="Dipeptidyl peptidase 4">
    <location>
        <begin position="16"/>
        <end position="775"/>
    </location>
</feature>
<feature type="active site" description="Charge relay system" evidence="2">
    <location>
        <position position="613"/>
    </location>
</feature>
<feature type="active site" description="Charge relay system" evidence="2">
    <location>
        <position position="690"/>
    </location>
</feature>
<feature type="active site" description="Charge relay system" evidence="2">
    <location>
        <position position="725"/>
    </location>
</feature>
<feature type="glycosylation site" description="N-linked (GlcNAc...) asparagine" evidence="1">
    <location>
        <position position="81"/>
    </location>
</feature>
<feature type="glycosylation site" description="N-linked (GlcNAc...) asparagine" evidence="1">
    <location>
        <position position="111"/>
    </location>
</feature>
<feature type="glycosylation site" description="N-linked (GlcNAc...) asparagine" evidence="1">
    <location>
        <position position="154"/>
    </location>
</feature>
<feature type="glycosylation site" description="N-linked (GlcNAc...) asparagine" evidence="1">
    <location>
        <position position="219"/>
    </location>
</feature>
<protein>
    <recommendedName>
        <fullName>Dipeptidyl peptidase 4</fullName>
        <ecNumber>3.4.14.5</ecNumber>
    </recommendedName>
    <alternativeName>
        <fullName>Dipeptidyl peptidase IV</fullName>
        <shortName>DPP IV</shortName>
        <shortName>DppIV</shortName>
    </alternativeName>
</protein>
<reference key="1">
    <citation type="journal article" date="2005" name="Microbiology">
        <title>Aminopeptidases and dipeptidyl-peptidases secreted by the dermatophyte Trichophyton rubrum.</title>
        <authorList>
            <person name="Monod M."/>
            <person name="Lechenne B."/>
            <person name="Jousson O."/>
            <person name="Grand D."/>
            <person name="Zaugg C."/>
            <person name="Stoecklin R."/>
            <person name="Grouzmann E."/>
        </authorList>
    </citation>
    <scope>NUCLEOTIDE SEQUENCE [GENOMIC DNA]</scope>
    <scope>SUBCELLULAR LOCATION</scope>
    <scope>FUNCTION</scope>
    <scope>BIOPHYSICOCHEMICAL PROPERTIES</scope>
</reference>
<keyword id="KW-0031">Aminopeptidase</keyword>
<keyword id="KW-0325">Glycoprotein</keyword>
<keyword id="KW-0378">Hydrolase</keyword>
<keyword id="KW-0645">Protease</keyword>
<keyword id="KW-0964">Secreted</keyword>
<keyword id="KW-0720">Serine protease</keyword>
<keyword id="KW-0732">Signal</keyword>
<keyword id="KW-0843">Virulence</keyword>
<evidence type="ECO:0000255" key="1"/>
<evidence type="ECO:0000255" key="2">
    <source>
        <dbReference type="PROSITE-ProRule" id="PRU10084"/>
    </source>
</evidence>
<evidence type="ECO:0000269" key="3">
    <source>
    </source>
</evidence>
<evidence type="ECO:0000305" key="4"/>
<name>DPP4_TRIRU</name>
<sequence length="775" mass="88021">MKLLSLLMLAGIAQAIVPPREPRSPTGGGNKLLTYKECVPRATISPRSTSLAWINSEEDGRYISQSDDGALILQNIVTNTNKTLVAADKVPKGYYDYWFKPDLSAVLWATNYTKQYRHSYFANYFILDIKKGSLTPLAQDQAGDIQYAQWSPMNNSIAYVRXNDLYIWNNGKTKRITENGGPDIFNGVPDWVYEEEIFGDRFALWFSPDGEYLAYLRFNETGVPTYTIPYYKNKQKIAPAYPRELEIRYPKVSAKNPTVQFHLLNIASSQETTIPVTAFPENDLVIGEVAWLSSGHDSVAYRAFNRVQDREKIVSVKVESKESKVIRERDGTDGWIDNLLSMSYIGNVNGKEYYVDISDASGWAHIYLYPVDGGKEIALTKGEWEVVAILKVDTKKKLIYFTSTKYHSTTRHVYSVSYDTKVMTPLVNDKEAAYYTASFSAKGGYYILSYQGPNVPYQELYSTKDSKKPLKTITSNDALLEKLKEYKLPKVSFFEIKLPSGETLNVKQRLPPNFNPHKKYPVLFTPYGGPGAQEVSQAWNSLDFKSYITSDPELEYVTWTVDNRGTGYKGRKFRSAVAKRLGFLEAQDQVFAAKEVLKNRWADKDHIGIWGXSYGGFLTAKTLETDSGVFTFGISTAPVSDFRLYDSMYTERYMKTVELNADGYSETAVHKVDGFKNLKGHYLIQHGTGDDNVHFQNAAVLSNTLMNGGVTADKLTTQWFTDSDHGIRYDMDSTYQYKQLSKMVYDQKQRRPESPPMHQWSKRVLAALFGERAEE</sequence>
<dbReference type="EC" id="3.4.14.5"/>
<dbReference type="EMBL" id="AY497021">
    <property type="protein sequence ID" value="AAS76665.1"/>
    <property type="molecule type" value="Genomic_DNA"/>
</dbReference>
<dbReference type="ESTHER" id="artbc-dpp4">
    <property type="family name" value="DPP4N_Peptidase_S9"/>
</dbReference>
<dbReference type="MEROPS" id="S09.008"/>
<dbReference type="GlyCosmos" id="Q5J6J3">
    <property type="glycosylation" value="4 sites, No reported glycans"/>
</dbReference>
<dbReference type="VEuPathDB" id="FungiDB:TERG_05735"/>
<dbReference type="GO" id="GO:0005576">
    <property type="term" value="C:extracellular region"/>
    <property type="evidence" value="ECO:0007669"/>
    <property type="project" value="UniProtKB-SubCell"/>
</dbReference>
<dbReference type="GO" id="GO:0005886">
    <property type="term" value="C:plasma membrane"/>
    <property type="evidence" value="ECO:0007669"/>
    <property type="project" value="TreeGrafter"/>
</dbReference>
<dbReference type="GO" id="GO:0004177">
    <property type="term" value="F:aminopeptidase activity"/>
    <property type="evidence" value="ECO:0007669"/>
    <property type="project" value="UniProtKB-KW"/>
</dbReference>
<dbReference type="GO" id="GO:0008239">
    <property type="term" value="F:dipeptidyl-peptidase activity"/>
    <property type="evidence" value="ECO:0007669"/>
    <property type="project" value="UniProtKB-EC"/>
</dbReference>
<dbReference type="GO" id="GO:0004252">
    <property type="term" value="F:serine-type endopeptidase activity"/>
    <property type="evidence" value="ECO:0007669"/>
    <property type="project" value="InterPro"/>
</dbReference>
<dbReference type="GO" id="GO:0006508">
    <property type="term" value="P:proteolysis"/>
    <property type="evidence" value="ECO:0007669"/>
    <property type="project" value="UniProtKB-KW"/>
</dbReference>
<dbReference type="FunFam" id="3.40.50.1820:FF:000003">
    <property type="entry name" value="Dipeptidyl peptidase 4"/>
    <property type="match status" value="1"/>
</dbReference>
<dbReference type="FunFam" id="2.140.10.30:FF:000003">
    <property type="entry name" value="Probable dipeptidyl peptidase 4"/>
    <property type="match status" value="1"/>
</dbReference>
<dbReference type="Gene3D" id="3.40.50.1820">
    <property type="entry name" value="alpha/beta hydrolase"/>
    <property type="match status" value="1"/>
</dbReference>
<dbReference type="Gene3D" id="2.140.10.30">
    <property type="entry name" value="Dipeptidylpeptidase IV, N-terminal domain"/>
    <property type="match status" value="1"/>
</dbReference>
<dbReference type="InterPro" id="IPR029058">
    <property type="entry name" value="AB_hydrolase_fold"/>
</dbReference>
<dbReference type="InterPro" id="IPR002471">
    <property type="entry name" value="Pept_S9_AS"/>
</dbReference>
<dbReference type="InterPro" id="IPR001375">
    <property type="entry name" value="Peptidase_S9_cat"/>
</dbReference>
<dbReference type="InterPro" id="IPR002469">
    <property type="entry name" value="Peptidase_S9B_N"/>
</dbReference>
<dbReference type="InterPro" id="IPR050278">
    <property type="entry name" value="Serine_Prot_S9B/DPPIV"/>
</dbReference>
<dbReference type="PANTHER" id="PTHR11731:SF162">
    <property type="entry name" value="DIPEPTIDYL PEPTIDASE 4-RELATED"/>
    <property type="match status" value="1"/>
</dbReference>
<dbReference type="PANTHER" id="PTHR11731">
    <property type="entry name" value="PROTEASE FAMILY S9B,C DIPEPTIDYL-PEPTIDASE IV-RELATED"/>
    <property type="match status" value="1"/>
</dbReference>
<dbReference type="Pfam" id="PF00930">
    <property type="entry name" value="DPPIV_N"/>
    <property type="match status" value="1"/>
</dbReference>
<dbReference type="Pfam" id="PF00326">
    <property type="entry name" value="Peptidase_S9"/>
    <property type="match status" value="1"/>
</dbReference>
<dbReference type="SUPFAM" id="SSF53474">
    <property type="entry name" value="alpha/beta-Hydrolases"/>
    <property type="match status" value="1"/>
</dbReference>
<dbReference type="SUPFAM" id="SSF82171">
    <property type="entry name" value="DPP6 N-terminal domain-like"/>
    <property type="match status" value="1"/>
</dbReference>
<dbReference type="PROSITE" id="PS00131">
    <property type="entry name" value="CARBOXYPEPT_SER_SER"/>
    <property type="match status" value="1"/>
</dbReference>
<dbReference type="PROSITE" id="PS00708">
    <property type="entry name" value="PRO_ENDOPEP_SER"/>
    <property type="match status" value="1"/>
</dbReference>
<organism>
    <name type="scientific">Trichophyton rubrum</name>
    <name type="common">Athlete's foot fungus</name>
    <name type="synonym">Epidermophyton rubrum</name>
    <dbReference type="NCBI Taxonomy" id="5551"/>
    <lineage>
        <taxon>Eukaryota</taxon>
        <taxon>Fungi</taxon>
        <taxon>Dikarya</taxon>
        <taxon>Ascomycota</taxon>
        <taxon>Pezizomycotina</taxon>
        <taxon>Eurotiomycetes</taxon>
        <taxon>Eurotiomycetidae</taxon>
        <taxon>Onygenales</taxon>
        <taxon>Arthrodermataceae</taxon>
        <taxon>Trichophyton</taxon>
    </lineage>
</organism>
<accession>Q5J6J3</accession>
<proteinExistence type="evidence at protein level"/>
<gene>
    <name type="primary">DPP4</name>
</gene>